<gene>
    <name evidence="1" type="primary">rbfA</name>
    <name type="ordered locus">RPA0435</name>
</gene>
<name>RBFA_RHOPA</name>
<keyword id="KW-0963">Cytoplasm</keyword>
<keyword id="KW-0690">Ribosome biogenesis</keyword>
<dbReference type="EMBL" id="BX572594">
    <property type="protein sequence ID" value="CAE25879.1"/>
    <property type="molecule type" value="Genomic_DNA"/>
</dbReference>
<dbReference type="RefSeq" id="WP_011156003.1">
    <property type="nucleotide sequence ID" value="NZ_CP116810.1"/>
</dbReference>
<dbReference type="SMR" id="Q6NCN6"/>
<dbReference type="STRING" id="258594.RPA0435"/>
<dbReference type="GeneID" id="66891450"/>
<dbReference type="eggNOG" id="COG0858">
    <property type="taxonomic scope" value="Bacteria"/>
</dbReference>
<dbReference type="HOGENOM" id="CLU_089475_1_0_5"/>
<dbReference type="PhylomeDB" id="Q6NCN6"/>
<dbReference type="GO" id="GO:0005829">
    <property type="term" value="C:cytosol"/>
    <property type="evidence" value="ECO:0007669"/>
    <property type="project" value="TreeGrafter"/>
</dbReference>
<dbReference type="GO" id="GO:0043024">
    <property type="term" value="F:ribosomal small subunit binding"/>
    <property type="evidence" value="ECO:0007669"/>
    <property type="project" value="TreeGrafter"/>
</dbReference>
<dbReference type="GO" id="GO:0030490">
    <property type="term" value="P:maturation of SSU-rRNA"/>
    <property type="evidence" value="ECO:0007669"/>
    <property type="project" value="UniProtKB-UniRule"/>
</dbReference>
<dbReference type="Gene3D" id="3.30.300.20">
    <property type="match status" value="1"/>
</dbReference>
<dbReference type="HAMAP" id="MF_00003">
    <property type="entry name" value="RbfA"/>
    <property type="match status" value="1"/>
</dbReference>
<dbReference type="InterPro" id="IPR015946">
    <property type="entry name" value="KH_dom-like_a/b"/>
</dbReference>
<dbReference type="InterPro" id="IPR000238">
    <property type="entry name" value="RbfA"/>
</dbReference>
<dbReference type="InterPro" id="IPR023799">
    <property type="entry name" value="RbfA_dom_sf"/>
</dbReference>
<dbReference type="InterPro" id="IPR020053">
    <property type="entry name" value="Ribosome-bd_factorA_CS"/>
</dbReference>
<dbReference type="NCBIfam" id="NF001802">
    <property type="entry name" value="PRK00521.2-5"/>
    <property type="match status" value="1"/>
</dbReference>
<dbReference type="NCBIfam" id="TIGR00082">
    <property type="entry name" value="rbfA"/>
    <property type="match status" value="1"/>
</dbReference>
<dbReference type="PANTHER" id="PTHR33515">
    <property type="entry name" value="RIBOSOME-BINDING FACTOR A, CHLOROPLASTIC-RELATED"/>
    <property type="match status" value="1"/>
</dbReference>
<dbReference type="PANTHER" id="PTHR33515:SF1">
    <property type="entry name" value="RIBOSOME-BINDING FACTOR A, CHLOROPLASTIC-RELATED"/>
    <property type="match status" value="1"/>
</dbReference>
<dbReference type="Pfam" id="PF02033">
    <property type="entry name" value="RBFA"/>
    <property type="match status" value="1"/>
</dbReference>
<dbReference type="SUPFAM" id="SSF89919">
    <property type="entry name" value="Ribosome-binding factor A, RbfA"/>
    <property type="match status" value="1"/>
</dbReference>
<dbReference type="PROSITE" id="PS01319">
    <property type="entry name" value="RBFA"/>
    <property type="match status" value="1"/>
</dbReference>
<evidence type="ECO:0000255" key="1">
    <source>
        <dbReference type="HAMAP-Rule" id="MF_00003"/>
    </source>
</evidence>
<proteinExistence type="inferred from homology"/>
<reference key="1">
    <citation type="journal article" date="2004" name="Nat. Biotechnol.">
        <title>Complete genome sequence of the metabolically versatile photosynthetic bacterium Rhodopseudomonas palustris.</title>
        <authorList>
            <person name="Larimer F.W."/>
            <person name="Chain P."/>
            <person name="Hauser L."/>
            <person name="Lamerdin J.E."/>
            <person name="Malfatti S."/>
            <person name="Do L."/>
            <person name="Land M.L."/>
            <person name="Pelletier D.A."/>
            <person name="Beatty J.T."/>
            <person name="Lang A.S."/>
            <person name="Tabita F.R."/>
            <person name="Gibson J.L."/>
            <person name="Hanson T.E."/>
            <person name="Bobst C."/>
            <person name="Torres y Torres J.L."/>
            <person name="Peres C."/>
            <person name="Harrison F.H."/>
            <person name="Gibson J."/>
            <person name="Harwood C.S."/>
        </authorList>
    </citation>
    <scope>NUCLEOTIDE SEQUENCE [LARGE SCALE GENOMIC DNA]</scope>
    <source>
        <strain>ATCC BAA-98 / CGA009</strain>
    </source>
</reference>
<sequence>MSRQHQKSSPPGGSTRSLRVGELIRHAVAEILAQGGVHDPVLESHLVTVPEVRMSPDLKLATIYVMPLGGRDEKLVIDALEHHKRFLRGEIAHRVNLKFAPELRFRIDERFAEAERIDKLLRSPAVQKDLEPNSDQD</sequence>
<comment type="function">
    <text evidence="1">One of several proteins that assist in the late maturation steps of the functional core of the 30S ribosomal subunit. Associates with free 30S ribosomal subunits (but not with 30S subunits that are part of 70S ribosomes or polysomes). Required for efficient processing of 16S rRNA. May interact with the 5'-terminal helix region of 16S rRNA.</text>
</comment>
<comment type="subunit">
    <text evidence="1">Monomer. Binds 30S ribosomal subunits, but not 50S ribosomal subunits or 70S ribosomes.</text>
</comment>
<comment type="subcellular location">
    <subcellularLocation>
        <location evidence="1">Cytoplasm</location>
    </subcellularLocation>
</comment>
<comment type="similarity">
    <text evidence="1">Belongs to the RbfA family.</text>
</comment>
<organism>
    <name type="scientific">Rhodopseudomonas palustris (strain ATCC BAA-98 / CGA009)</name>
    <dbReference type="NCBI Taxonomy" id="258594"/>
    <lineage>
        <taxon>Bacteria</taxon>
        <taxon>Pseudomonadati</taxon>
        <taxon>Pseudomonadota</taxon>
        <taxon>Alphaproteobacteria</taxon>
        <taxon>Hyphomicrobiales</taxon>
        <taxon>Nitrobacteraceae</taxon>
        <taxon>Rhodopseudomonas</taxon>
    </lineage>
</organism>
<feature type="chain" id="PRO_0000102720" description="Ribosome-binding factor A">
    <location>
        <begin position="1"/>
        <end position="137"/>
    </location>
</feature>
<accession>Q6NCN6</accession>
<protein>
    <recommendedName>
        <fullName evidence="1">Ribosome-binding factor A</fullName>
    </recommendedName>
</protein>